<gene>
    <name type="primary">HSP90AB1</name>
    <name evidence="3" type="synonym">HSPC3</name>
</gene>
<feature type="chain" id="PRO_0000271478" description="Heat shock protein HSP 90-beta">
    <location>
        <begin position="1"/>
        <end position="724"/>
    </location>
</feature>
<feature type="region of interest" description="Interaction with TP53" evidence="3">
    <location>
        <begin position="1"/>
        <end position="527"/>
    </location>
</feature>
<feature type="region of interest" description="Interaction with BIRC2" evidence="3">
    <location>
        <begin position="1"/>
        <end position="214"/>
    </location>
</feature>
<feature type="region of interest" description="Interaction with NR3C1" evidence="4">
    <location>
        <begin position="9"/>
        <end position="231"/>
    </location>
</feature>
<feature type="region of interest" description="Interaction with AHSA1" evidence="3">
    <location>
        <begin position="215"/>
        <end position="552"/>
    </location>
</feature>
<feature type="region of interest" description="Disordered" evidence="7">
    <location>
        <begin position="222"/>
        <end position="270"/>
    </location>
</feature>
<feature type="region of interest" description="Interaction with NR3C1" evidence="4">
    <location>
        <begin position="264"/>
        <end position="608"/>
    </location>
</feature>
<feature type="region of interest" description="Interaction with NR1D1" evidence="4">
    <location>
        <begin position="620"/>
        <end position="723"/>
    </location>
</feature>
<feature type="region of interest" description="Disordered" evidence="7">
    <location>
        <begin position="695"/>
        <end position="724"/>
    </location>
</feature>
<feature type="short sequence motif" description="TPR repeat-binding">
    <location>
        <begin position="720"/>
        <end position="724"/>
    </location>
</feature>
<feature type="compositionally biased region" description="Acidic residues" evidence="7">
    <location>
        <begin position="225"/>
        <end position="244"/>
    </location>
</feature>
<feature type="binding site" evidence="1">
    <location>
        <position position="46"/>
    </location>
    <ligand>
        <name>ATP</name>
        <dbReference type="ChEBI" id="CHEBI:30616"/>
    </ligand>
</feature>
<feature type="binding site" evidence="1">
    <location>
        <position position="88"/>
    </location>
    <ligand>
        <name>ATP</name>
        <dbReference type="ChEBI" id="CHEBI:30616"/>
    </ligand>
</feature>
<feature type="binding site" evidence="1">
    <location>
        <position position="107"/>
    </location>
    <ligand>
        <name>ATP</name>
        <dbReference type="ChEBI" id="CHEBI:30616"/>
    </ligand>
</feature>
<feature type="binding site" evidence="1">
    <location>
        <position position="133"/>
    </location>
    <ligand>
        <name>ATP</name>
        <dbReference type="ChEBI" id="CHEBI:30616"/>
    </ligand>
</feature>
<feature type="binding site" evidence="1">
    <location>
        <position position="392"/>
    </location>
    <ligand>
        <name>ATP</name>
        <dbReference type="ChEBI" id="CHEBI:30616"/>
    </ligand>
</feature>
<feature type="site" description="Cleaved under oxidative stress" evidence="3">
    <location>
        <begin position="126"/>
        <end position="127"/>
    </location>
</feature>
<feature type="modified residue" description="N6-succinyllysine" evidence="4">
    <location>
        <position position="219"/>
    </location>
</feature>
<feature type="modified residue" description="Phosphoserine" evidence="3">
    <location>
        <position position="226"/>
    </location>
</feature>
<feature type="modified residue" description="Phosphoserine" evidence="3">
    <location>
        <position position="255"/>
    </location>
</feature>
<feature type="modified residue" description="Phosphoserine" evidence="4">
    <location>
        <position position="261"/>
    </location>
</feature>
<feature type="modified residue" description="Phosphothreonine" evidence="3">
    <location>
        <position position="297"/>
    </location>
</feature>
<feature type="modified residue" description="Phosphotyrosine" evidence="3">
    <location>
        <position position="301"/>
    </location>
</feature>
<feature type="modified residue" description="Phosphotyrosine" evidence="4">
    <location>
        <position position="305"/>
    </location>
</feature>
<feature type="modified residue" description="Phosphoserine" evidence="3">
    <location>
        <position position="307"/>
    </location>
</feature>
<feature type="modified residue" description="N6-malonyllysine" evidence="1">
    <location>
        <position position="399"/>
    </location>
</feature>
<feature type="modified residue" description="N6-acetyllysine" evidence="3">
    <location>
        <position position="435"/>
    </location>
</feature>
<feature type="modified residue" description="Phosphoserine" evidence="3">
    <location>
        <position position="445"/>
    </location>
</feature>
<feature type="modified residue" description="Phosphothreonine" evidence="3">
    <location>
        <position position="479"/>
    </location>
</feature>
<feature type="modified residue" description="N6-acetyllysine" evidence="3">
    <location>
        <position position="481"/>
    </location>
</feature>
<feature type="modified residue" description="Phosphotyrosine" evidence="4">
    <location>
        <position position="484"/>
    </location>
</feature>
<feature type="modified residue" description="N6-methylated lysine; alternate" evidence="3">
    <location>
        <position position="531"/>
    </location>
</feature>
<feature type="modified residue" description="N6-succinyllysine; alternate" evidence="4">
    <location>
        <position position="531"/>
    </location>
</feature>
<feature type="modified residue" description="N6-methylated lysine" evidence="3">
    <location>
        <position position="574"/>
    </location>
</feature>
<feature type="modified residue" description="S-nitrosocysteine" evidence="3">
    <location>
        <position position="590"/>
    </location>
</feature>
<feature type="modified residue" description="N6-acetyllysine" evidence="4">
    <location>
        <position position="624"/>
    </location>
</feature>
<feature type="modified residue" description="Phosphoserine" evidence="3">
    <location>
        <position position="669"/>
    </location>
</feature>
<feature type="modified residue" description="Phosphoserine; by PLK2 and PLK3" evidence="3">
    <location>
        <position position="718"/>
    </location>
</feature>
<feature type="glycosylation site" description="O-linked (GlcNAc) serine" evidence="1">
    <location>
        <position position="434"/>
    </location>
</feature>
<feature type="glycosylation site" description="O-linked (GlcNAc) serine" evidence="1">
    <location>
        <position position="452"/>
    </location>
</feature>
<evidence type="ECO:0000250" key="1"/>
<evidence type="ECO:0000250" key="2">
    <source>
        <dbReference type="UniProtKB" id="P07900"/>
    </source>
</evidence>
<evidence type="ECO:0000250" key="3">
    <source>
        <dbReference type="UniProtKB" id="P08238"/>
    </source>
</evidence>
<evidence type="ECO:0000250" key="4">
    <source>
        <dbReference type="UniProtKB" id="P11499"/>
    </source>
</evidence>
<evidence type="ECO:0000250" key="5">
    <source>
        <dbReference type="UniProtKB" id="P34058"/>
    </source>
</evidence>
<evidence type="ECO:0000250" key="6">
    <source>
        <dbReference type="UniProtKB" id="Q6AZV1"/>
    </source>
</evidence>
<evidence type="ECO:0000256" key="7">
    <source>
        <dbReference type="SAM" id="MobiDB-lite"/>
    </source>
</evidence>
<evidence type="ECO:0000305" key="8"/>
<dbReference type="EMBL" id="CR860313">
    <property type="protein sequence ID" value="CAH92450.1"/>
    <property type="molecule type" value="mRNA"/>
</dbReference>
<dbReference type="RefSeq" id="NP_001126444.1">
    <property type="nucleotide sequence ID" value="NM_001132972.2"/>
</dbReference>
<dbReference type="SMR" id="Q5R710"/>
<dbReference type="STRING" id="9601.ENSPPYP00000018631"/>
<dbReference type="GlyCosmos" id="Q5R710">
    <property type="glycosylation" value="2 sites, No reported glycans"/>
</dbReference>
<dbReference type="GeneID" id="100173428"/>
<dbReference type="KEGG" id="pon:100173428"/>
<dbReference type="CTD" id="3326"/>
<dbReference type="eggNOG" id="KOG0019">
    <property type="taxonomic scope" value="Eukaryota"/>
</dbReference>
<dbReference type="InParanoid" id="Q5R710"/>
<dbReference type="OrthoDB" id="5426351at2759"/>
<dbReference type="Proteomes" id="UP000001595">
    <property type="component" value="Unplaced"/>
</dbReference>
<dbReference type="GO" id="GO:0034751">
    <property type="term" value="C:aryl hydrocarbon receptor complex"/>
    <property type="evidence" value="ECO:0000250"/>
    <property type="project" value="UniProtKB"/>
</dbReference>
<dbReference type="GO" id="GO:0005737">
    <property type="term" value="C:cytoplasm"/>
    <property type="evidence" value="ECO:0000250"/>
    <property type="project" value="UniProtKB"/>
</dbReference>
<dbReference type="GO" id="GO:0120293">
    <property type="term" value="C:dynein axonemal particle"/>
    <property type="evidence" value="ECO:0000250"/>
    <property type="project" value="UniProtKB"/>
</dbReference>
<dbReference type="GO" id="GO:0005576">
    <property type="term" value="C:extracellular region"/>
    <property type="evidence" value="ECO:0000250"/>
    <property type="project" value="UniProtKB"/>
</dbReference>
<dbReference type="GO" id="GO:0042470">
    <property type="term" value="C:melanosome"/>
    <property type="evidence" value="ECO:0007669"/>
    <property type="project" value="UniProtKB-SubCell"/>
</dbReference>
<dbReference type="GO" id="GO:0005634">
    <property type="term" value="C:nucleus"/>
    <property type="evidence" value="ECO:0000250"/>
    <property type="project" value="UniProtKB"/>
</dbReference>
<dbReference type="GO" id="GO:0005886">
    <property type="term" value="C:plasma membrane"/>
    <property type="evidence" value="ECO:0007669"/>
    <property type="project" value="UniProtKB-SubCell"/>
</dbReference>
<dbReference type="GO" id="GO:0005524">
    <property type="term" value="F:ATP binding"/>
    <property type="evidence" value="ECO:0007669"/>
    <property type="project" value="UniProtKB-KW"/>
</dbReference>
<dbReference type="GO" id="GO:0016887">
    <property type="term" value="F:ATP hydrolysis activity"/>
    <property type="evidence" value="ECO:0007669"/>
    <property type="project" value="InterPro"/>
</dbReference>
<dbReference type="GO" id="GO:0140662">
    <property type="term" value="F:ATP-dependent protein folding chaperone"/>
    <property type="evidence" value="ECO:0007669"/>
    <property type="project" value="InterPro"/>
</dbReference>
<dbReference type="GO" id="GO:0046983">
    <property type="term" value="F:protein dimerization activity"/>
    <property type="evidence" value="ECO:0000250"/>
    <property type="project" value="UniProtKB"/>
</dbReference>
<dbReference type="GO" id="GO:0141069">
    <property type="term" value="F:receptor ligand inhibitor activity"/>
    <property type="evidence" value="ECO:0000250"/>
    <property type="project" value="UniProtKB"/>
</dbReference>
<dbReference type="GO" id="GO:0051082">
    <property type="term" value="F:unfolded protein binding"/>
    <property type="evidence" value="ECO:0007669"/>
    <property type="project" value="InterPro"/>
</dbReference>
<dbReference type="GO" id="GO:0032435">
    <property type="term" value="P:negative regulation of proteasomal ubiquitin-dependent protein catabolic process"/>
    <property type="evidence" value="ECO:0000250"/>
    <property type="project" value="UniProtKB"/>
</dbReference>
<dbReference type="GO" id="GO:0030511">
    <property type="term" value="P:positive regulation of transforming growth factor beta receptor signaling pathway"/>
    <property type="evidence" value="ECO:0000250"/>
    <property type="project" value="UniProtKB"/>
</dbReference>
<dbReference type="GO" id="GO:0051726">
    <property type="term" value="P:regulation of cell cycle"/>
    <property type="evidence" value="ECO:0000250"/>
    <property type="project" value="UniProtKB"/>
</dbReference>
<dbReference type="CDD" id="cd16927">
    <property type="entry name" value="HATPase_Hsp90-like"/>
    <property type="match status" value="1"/>
</dbReference>
<dbReference type="FunFam" id="1.20.120.790:FF:000001">
    <property type="entry name" value="Heat shock protein 90 alpha"/>
    <property type="match status" value="1"/>
</dbReference>
<dbReference type="FunFam" id="3.30.230.80:FF:000001">
    <property type="entry name" value="Heat shock protein 90 alpha"/>
    <property type="match status" value="1"/>
</dbReference>
<dbReference type="FunFam" id="3.40.50.11260:FF:000001">
    <property type="entry name" value="Heat shock protein 90 alpha"/>
    <property type="match status" value="1"/>
</dbReference>
<dbReference type="FunFam" id="3.30.565.10:FF:000204">
    <property type="entry name" value="Heat shock protein HSP 90-beta"/>
    <property type="match status" value="1"/>
</dbReference>
<dbReference type="Gene3D" id="3.30.230.80">
    <property type="match status" value="1"/>
</dbReference>
<dbReference type="Gene3D" id="3.40.50.11260">
    <property type="match status" value="1"/>
</dbReference>
<dbReference type="Gene3D" id="1.20.120.790">
    <property type="entry name" value="Heat shock protein 90, C-terminal domain"/>
    <property type="match status" value="1"/>
</dbReference>
<dbReference type="Gene3D" id="3.30.565.10">
    <property type="entry name" value="Histidine kinase-like ATPase, C-terminal domain"/>
    <property type="match status" value="1"/>
</dbReference>
<dbReference type="HAMAP" id="MF_00505">
    <property type="entry name" value="HSP90"/>
    <property type="match status" value="1"/>
</dbReference>
<dbReference type="InterPro" id="IPR036890">
    <property type="entry name" value="HATPase_C_sf"/>
</dbReference>
<dbReference type="InterPro" id="IPR019805">
    <property type="entry name" value="Heat_shock_protein_90_CS"/>
</dbReference>
<dbReference type="InterPro" id="IPR037196">
    <property type="entry name" value="HSP90_C"/>
</dbReference>
<dbReference type="InterPro" id="IPR001404">
    <property type="entry name" value="Hsp90_fam"/>
</dbReference>
<dbReference type="InterPro" id="IPR020575">
    <property type="entry name" value="Hsp90_N"/>
</dbReference>
<dbReference type="InterPro" id="IPR020568">
    <property type="entry name" value="Ribosomal_Su5_D2-typ_SF"/>
</dbReference>
<dbReference type="NCBIfam" id="NF003555">
    <property type="entry name" value="PRK05218.1"/>
    <property type="match status" value="1"/>
</dbReference>
<dbReference type="PANTHER" id="PTHR11528">
    <property type="entry name" value="HEAT SHOCK PROTEIN 90 FAMILY MEMBER"/>
    <property type="match status" value="1"/>
</dbReference>
<dbReference type="Pfam" id="PF13589">
    <property type="entry name" value="HATPase_c_3"/>
    <property type="match status" value="1"/>
</dbReference>
<dbReference type="Pfam" id="PF00183">
    <property type="entry name" value="HSP90"/>
    <property type="match status" value="1"/>
</dbReference>
<dbReference type="PIRSF" id="PIRSF002583">
    <property type="entry name" value="Hsp90"/>
    <property type="match status" value="1"/>
</dbReference>
<dbReference type="PRINTS" id="PR00775">
    <property type="entry name" value="HEATSHOCK90"/>
</dbReference>
<dbReference type="SMART" id="SM00387">
    <property type="entry name" value="HATPase_c"/>
    <property type="match status" value="1"/>
</dbReference>
<dbReference type="SUPFAM" id="SSF55874">
    <property type="entry name" value="ATPase domain of HSP90 chaperone/DNA topoisomerase II/histidine kinase"/>
    <property type="match status" value="1"/>
</dbReference>
<dbReference type="SUPFAM" id="SSF110942">
    <property type="entry name" value="HSP90 C-terminal domain"/>
    <property type="match status" value="1"/>
</dbReference>
<dbReference type="SUPFAM" id="SSF54211">
    <property type="entry name" value="Ribosomal protein S5 domain 2-like"/>
    <property type="match status" value="1"/>
</dbReference>
<dbReference type="PROSITE" id="PS00298">
    <property type="entry name" value="HSP90"/>
    <property type="match status" value="1"/>
</dbReference>
<name>HS90B_PONAB</name>
<proteinExistence type="evidence at transcript level"/>
<reference key="1">
    <citation type="submission" date="2004-11" db="EMBL/GenBank/DDBJ databases">
        <authorList>
            <consortium name="The German cDNA consortium"/>
        </authorList>
    </citation>
    <scope>NUCLEOTIDE SEQUENCE [LARGE SCALE MRNA]</scope>
    <source>
        <tissue>Brain cortex</tissue>
    </source>
</reference>
<accession>Q5R710</accession>
<comment type="function">
    <text evidence="3">Molecular chaperone that promotes the maturation, structural maintenance and proper regulation of specific target proteins involved for instance in cell cycle control and signal transduction. Undergoes a functional cycle linked to its ATPase activity. This cycle probably induces conformational changes in the client proteins, thereby causing their activation. Interacts dynamically with various co-chaperones that modulate its substrate recognition, ATPase cycle and chaperone function. Engages with a range of client protein classes via its interaction with various co-chaperone proteins or complexes, that act as adapters, simultaneously able to interact with the specific client and the central chaperone itself. Recruitment of ATP and co-chaperone followed by client protein forms a functional chaperone. After the completion of the chaperoning process, properly folded client protein and co-chaperone leave HSP90 in an ADP-bound partially open conformation and finally, ADP is released from HSP90 which acquires an open conformation for the next cycle. Apart from its chaperone activity, it also plays a role in the regulation of the transcription machinery. HSP90 and its co-chaperones modulate transcription at least at three different levels. They first alter the steady-state levels of certain transcription factors in response to various physiological cues. Second, they modulate the activity of certain epigenetic modifiers, such as histone deacetylases or DNA methyl transferases, and thereby respond to the change in the environment. Third, they participate in the eviction of histones from the promoter region of certain genes and thereby turn on gene expression. Antagonizes STUB1-mediated inhibition of TGF-beta signaling via inhibition of STUB1-mediated SMAD3 ubiquitination and degradation. Promotes cell differentiation by chaperoning BIRC2 and thereby protecting from auto-ubiquitination and degradation by the proteasomal machinery. Main chaperone involved in the phosphorylation/activation of the STAT1 by chaperoning both JAK2 and PRKCE under heat shock and in turn, activates its own transcription. Involved in the translocation into ERGIC (endoplasmic reticulum-Golgi intermediate compartment) of leaderless cargos (lacking the secretion signal sequence) such as the interleukin 1/IL-1; the translocation process is mediated by the cargo receptor TMED10.</text>
</comment>
<comment type="activity regulation">
    <text evidence="3">In the resting state, through the dimerization of its C-terminal domain, HSP90 forms a homodimer which is defined as the open conformation. Upon ATP-binding, the N-terminal domain undergoes significant conformational changes and comes in contact to form an active closed conformation. After HSP90 finishes its chaperoning tasks of assisting the proper folding, stabilization and activation of client proteins under the active state, ATP molecule is hydrolyzed to ADP which then dissociates from HSP90 and directs the protein back to the resting state.</text>
</comment>
<comment type="subunit">
    <text evidence="3 4 5">Monomer. Homodimer (By similarity). Forms a complex with CDK6 and CDC37. Interacts with UNC45A; binding to UNC45A involves 2 UNC45A monomers per HSP90AB1 dimer (By similarity). Interacts with CHORDC1 (By similarity). Interacts with DNAJC7. Interacts with FKBP4. May interact with NWD1. Interacts with SGTA. Interacts with HSF1 in an ATP-dependent manner. Interacts with MET; the interaction suppresses MET kinase activity. Interacts with ERBB2 in an ATP-dependent manner; the interaction suppresses ERBB2 kinase activity. Interacts with HIF1A, KEAP1 and RHOBTB2. Interacts with STUB1 and SMAD3. Interacts with XPO1 and AHSA1. Interacts with BIRC2. Interacts with KCNQ4; promotes cell surface expression of KCNQ4. Interacts with BIRC2; prevents auto-ubiquitination and degradation of its client protein BIRC2. Interacts with NOS3. Interacts with AHR; interaction is inhibited by HSP90AB1 phosphorylation on Ser-226 and Ser-255. Interacts with STIP1 and CDC37; upon SMYD2-dependent methylation. Interacts with JAK2 and PRKCE; promotes functional activation in a heat shock-dependent manner. Interacts with HSP90AA1; interaction is constitutive. HSP90AB1-CDC37 chaperone complex interacts with inactive MAPK7 (via N-terminal half) in resting cells; the interaction is MAP2K5-independent and prevents from ubiquitination and proteasomal degradation. Interacts with CDC25A; prevents heat shock-mediated CDC25A degradation and contributes to cell cycle progression. Interacts with TP53 (via DNA binding domain); suppresses TP53 aggregation and prevents from irreversible thermal inactivation. Interacts with TGFB1 processed form (LAP); inhibits latent TGFB1 activation (By similarity). Interacts with TRIM8; prevents nucleus translocation of phosphorylated STAT3 and HSP90AB1 (By similarity). Interacts with NR3C1 (via domain NR LBD) and NR1D1 (via domain NR LBD) (By similarity). Interacts with PDCL3 (By similarity). Interacts with TTC4 (via TPR repeats) (By similarity). Interacts with IL1B; the interaction facilitates cargo translocation into the ERGIC (By similarity).</text>
</comment>
<comment type="subcellular location">
    <subcellularLocation>
        <location evidence="3">Cytoplasm</location>
    </subcellularLocation>
    <subcellularLocation>
        <location evidence="3">Melanosome</location>
    </subcellularLocation>
    <subcellularLocation>
        <location evidence="3">Nucleus</location>
    </subcellularLocation>
    <subcellularLocation>
        <location evidence="3">Secreted</location>
    </subcellularLocation>
    <subcellularLocation>
        <location evidence="3">Cell membrane</location>
    </subcellularLocation>
    <subcellularLocation>
        <location evidence="6">Dynein axonemal particle</location>
    </subcellularLocation>
    <text evidence="3">Translocates with BIRC2 from the nucleus to the cytoplasm during differentiation. Secreted when associated with TGFB1 processed form (LAP).</text>
</comment>
<comment type="domain">
    <text evidence="2">The TPR repeat-binding motif mediates interaction with TPR repeat-containing proteins.</text>
</comment>
<comment type="PTM">
    <text evidence="3">Ubiquitinated in the presence of STUB1-UBE2D1 complex (in vitro).</text>
</comment>
<comment type="PTM">
    <text evidence="3">ISGylated.</text>
</comment>
<comment type="PTM">
    <text evidence="3">S-nitrosylated; negatively regulates the ATPase activity.</text>
</comment>
<comment type="PTM">
    <text evidence="3">Phosphorylation at Tyr-301 by SRC is induced by lipopolysaccharide. Phosphorylation at Ser-226 and Ser-255 inhibits AHR interaction.</text>
</comment>
<comment type="PTM">
    <text evidence="3">Methylated by SMYD2; facilitates dimerization and chaperone complex formation; promotes cancer cell proliferation.</text>
</comment>
<comment type="PTM">
    <text evidence="3">Cleaved following oxidative stress resulting in HSP90AB1 protein radicals formation; disrupts the chaperoning function and the degradation of its client proteins.</text>
</comment>
<comment type="similarity">
    <text evidence="8">Belongs to the heat shock protein 90 family.</text>
</comment>
<sequence>MPEEVHHGEEEVETFAFQAEIAQLMSLIINTFYSNKEIFLRELISNASDALDKIRYESLTDPSKLDSGKELKIDIIPNPQERTLTLVDTGIGMTKADLINNLGTIAKSGTKAFMEALQAGADISMIGQFGVGFYSAYLVAEKVVVITKHNDDEQYAWESSAGGSFTVRADHGEPIGRGTKVILHLKEDQTEYLEERRVKEVVKKHSQFIGYPITLYLEKEREKEISDDEAEEEKGEKEEEDKDDEEKPKIEDVGSDEEDDSGKDKKKKTKKIKEKYIDQEELNKTKPIWTRNPDDITQEEYGEFYKSLTNDWEDHLAVKHFSVEGQLEFRALLFIPRRAPFDLFENKKKKNNIKLYVRRVFIMDSCDELIPEYLNFIRGVVDSEDLPLNISREMLQQSKILKVIRKNIVKKCLELFSELAEDKENYKKFYEAFSKNLKLGIHEDSTNRRRLSELLRYHTSQSGDEMTSLSEYVSRMKETQKSIYYITGESKEQVANSAFVERVRKRGFEVVYMTEPIDEYCVQQLKEFDGKSLVSVTKEGLELPEDEEEKKKMEESKAKFENLCKLMKEILDKKVEEVTISNRLVSSPCCIVTSTYGWTANMERIMKAQALRDNSTMGYMMAKKHLEINPDHPIVETLRQKAEADKNDKAVKDLVVLLFETALLSSGFSLEDPQTHSNRIYRMIKLGLGIDEDEVAAEEPSAAVPDEIPPLEGDEDASRMEEVD</sequence>
<keyword id="KW-0007">Acetylation</keyword>
<keyword id="KW-0067">ATP-binding</keyword>
<keyword id="KW-1003">Cell membrane</keyword>
<keyword id="KW-0143">Chaperone</keyword>
<keyword id="KW-0963">Cytoplasm</keyword>
<keyword id="KW-0325">Glycoprotein</keyword>
<keyword id="KW-0472">Membrane</keyword>
<keyword id="KW-0488">Methylation</keyword>
<keyword id="KW-0547">Nucleotide-binding</keyword>
<keyword id="KW-0539">Nucleus</keyword>
<keyword id="KW-0597">Phosphoprotein</keyword>
<keyword id="KW-1185">Reference proteome</keyword>
<keyword id="KW-0702">S-nitrosylation</keyword>
<keyword id="KW-0964">Secreted</keyword>
<keyword id="KW-0346">Stress response</keyword>
<keyword id="KW-0832">Ubl conjugation</keyword>
<protein>
    <recommendedName>
        <fullName>Heat shock protein HSP 90-beta</fullName>
    </recommendedName>
</protein>
<organism>
    <name type="scientific">Pongo abelii</name>
    <name type="common">Sumatran orangutan</name>
    <name type="synonym">Pongo pygmaeus abelii</name>
    <dbReference type="NCBI Taxonomy" id="9601"/>
    <lineage>
        <taxon>Eukaryota</taxon>
        <taxon>Metazoa</taxon>
        <taxon>Chordata</taxon>
        <taxon>Craniata</taxon>
        <taxon>Vertebrata</taxon>
        <taxon>Euteleostomi</taxon>
        <taxon>Mammalia</taxon>
        <taxon>Eutheria</taxon>
        <taxon>Euarchontoglires</taxon>
        <taxon>Primates</taxon>
        <taxon>Haplorrhini</taxon>
        <taxon>Catarrhini</taxon>
        <taxon>Hominidae</taxon>
        <taxon>Pongo</taxon>
    </lineage>
</organism>